<gene>
    <name evidence="1" type="primary">mtnC</name>
    <name type="ordered locus">XC_2371</name>
</gene>
<proteinExistence type="inferred from homology"/>
<comment type="function">
    <text evidence="1">Bifunctional enzyme that catalyzes the enolization of 2,3-diketo-5-methylthiopentyl-1-phosphate (DK-MTP-1-P) into the intermediate 2-hydroxy-3-keto-5-methylthiopentenyl-1-phosphate (HK-MTPenyl-1-P), which is then dephosphorylated to form the acireductone 1,2-dihydroxy-3-keto-5-methylthiopentene (DHK-MTPene).</text>
</comment>
<comment type="catalytic activity">
    <reaction evidence="1">
        <text>5-methylsulfanyl-2,3-dioxopentyl phosphate + H2O = 1,2-dihydroxy-5-(methylsulfanyl)pent-1-en-3-one + phosphate</text>
        <dbReference type="Rhea" id="RHEA:21700"/>
        <dbReference type="ChEBI" id="CHEBI:15377"/>
        <dbReference type="ChEBI" id="CHEBI:43474"/>
        <dbReference type="ChEBI" id="CHEBI:49252"/>
        <dbReference type="ChEBI" id="CHEBI:58828"/>
        <dbReference type="EC" id="3.1.3.77"/>
    </reaction>
</comment>
<comment type="cofactor">
    <cofactor evidence="1">
        <name>Mg(2+)</name>
        <dbReference type="ChEBI" id="CHEBI:18420"/>
    </cofactor>
    <text evidence="1">Binds 1 Mg(2+) ion per subunit.</text>
</comment>
<comment type="pathway">
    <text evidence="1">Amino-acid biosynthesis; L-methionine biosynthesis via salvage pathway; L-methionine from S-methyl-5-thio-alpha-D-ribose 1-phosphate: step 3/6.</text>
</comment>
<comment type="pathway">
    <text evidence="1">Amino-acid biosynthesis; L-methionine biosynthesis via salvage pathway; L-methionine from S-methyl-5-thio-alpha-D-ribose 1-phosphate: step 4/6.</text>
</comment>
<comment type="subunit">
    <text evidence="1">Monomer.</text>
</comment>
<comment type="similarity">
    <text evidence="1">Belongs to the HAD-like hydrolase superfamily. MasA/MtnC family.</text>
</comment>
<organism>
    <name type="scientific">Xanthomonas campestris pv. campestris (strain 8004)</name>
    <dbReference type="NCBI Taxonomy" id="314565"/>
    <lineage>
        <taxon>Bacteria</taxon>
        <taxon>Pseudomonadati</taxon>
        <taxon>Pseudomonadota</taxon>
        <taxon>Gammaproteobacteria</taxon>
        <taxon>Lysobacterales</taxon>
        <taxon>Lysobacteraceae</taxon>
        <taxon>Xanthomonas</taxon>
    </lineage>
</organism>
<name>MTNC_XANC8</name>
<dbReference type="EC" id="3.1.3.77" evidence="1"/>
<dbReference type="EMBL" id="CP000050">
    <property type="protein sequence ID" value="AAY49424.1"/>
    <property type="molecule type" value="Genomic_DNA"/>
</dbReference>
<dbReference type="RefSeq" id="WP_011036988.1">
    <property type="nucleotide sequence ID" value="NZ_CP155948.1"/>
</dbReference>
<dbReference type="SMR" id="Q4UU49"/>
<dbReference type="KEGG" id="xcb:XC_2371"/>
<dbReference type="HOGENOM" id="CLU_023273_0_0_6"/>
<dbReference type="UniPathway" id="UPA00904">
    <property type="reaction ID" value="UER00876"/>
</dbReference>
<dbReference type="UniPathway" id="UPA00904">
    <property type="reaction ID" value="UER00877"/>
</dbReference>
<dbReference type="Proteomes" id="UP000000420">
    <property type="component" value="Chromosome"/>
</dbReference>
<dbReference type="GO" id="GO:0043715">
    <property type="term" value="F:2,3-diketo-5-methylthiopentyl-1-phosphate enolase activity"/>
    <property type="evidence" value="ECO:0007669"/>
    <property type="project" value="UniProtKB-UniRule"/>
</dbReference>
<dbReference type="GO" id="GO:0043716">
    <property type="term" value="F:2-hydroxy-3-keto-5-methylthiopentenyl-1-phosphate phosphatase activity"/>
    <property type="evidence" value="ECO:0007669"/>
    <property type="project" value="UniProtKB-UniRule"/>
</dbReference>
<dbReference type="GO" id="GO:0043874">
    <property type="term" value="F:acireductone synthase activity"/>
    <property type="evidence" value="ECO:0007669"/>
    <property type="project" value="UniProtKB-EC"/>
</dbReference>
<dbReference type="GO" id="GO:0000287">
    <property type="term" value="F:magnesium ion binding"/>
    <property type="evidence" value="ECO:0007669"/>
    <property type="project" value="UniProtKB-UniRule"/>
</dbReference>
<dbReference type="GO" id="GO:0019509">
    <property type="term" value="P:L-methionine salvage from methylthioadenosine"/>
    <property type="evidence" value="ECO:0007669"/>
    <property type="project" value="UniProtKB-UniRule"/>
</dbReference>
<dbReference type="CDD" id="cd01629">
    <property type="entry name" value="HAD_EP"/>
    <property type="match status" value="1"/>
</dbReference>
<dbReference type="FunFam" id="1.10.720.60:FF:000003">
    <property type="entry name" value="Enolase-phosphatase E1"/>
    <property type="match status" value="1"/>
</dbReference>
<dbReference type="FunFam" id="3.40.50.1000:FF:000079">
    <property type="entry name" value="Enolase-phosphatase E1"/>
    <property type="match status" value="1"/>
</dbReference>
<dbReference type="Gene3D" id="1.10.720.60">
    <property type="match status" value="1"/>
</dbReference>
<dbReference type="Gene3D" id="3.40.50.1000">
    <property type="entry name" value="HAD superfamily/HAD-like"/>
    <property type="match status" value="1"/>
</dbReference>
<dbReference type="HAMAP" id="MF_01681">
    <property type="entry name" value="Salvage_MtnC"/>
    <property type="match status" value="1"/>
</dbReference>
<dbReference type="InterPro" id="IPR023943">
    <property type="entry name" value="Enolase-ppase_E1"/>
</dbReference>
<dbReference type="InterPro" id="IPR036412">
    <property type="entry name" value="HAD-like_sf"/>
</dbReference>
<dbReference type="InterPro" id="IPR006439">
    <property type="entry name" value="HAD-SF_hydro_IA"/>
</dbReference>
<dbReference type="InterPro" id="IPR023214">
    <property type="entry name" value="HAD_sf"/>
</dbReference>
<dbReference type="NCBIfam" id="TIGR01691">
    <property type="entry name" value="enolase-ppase"/>
    <property type="match status" value="1"/>
</dbReference>
<dbReference type="NCBIfam" id="TIGR01549">
    <property type="entry name" value="HAD-SF-IA-v1"/>
    <property type="match status" value="1"/>
</dbReference>
<dbReference type="PANTHER" id="PTHR20371">
    <property type="entry name" value="ENOLASE-PHOSPHATASE E1"/>
    <property type="match status" value="1"/>
</dbReference>
<dbReference type="PANTHER" id="PTHR20371:SF1">
    <property type="entry name" value="ENOLASE-PHOSPHATASE E1"/>
    <property type="match status" value="1"/>
</dbReference>
<dbReference type="Pfam" id="PF00702">
    <property type="entry name" value="Hydrolase"/>
    <property type="match status" value="1"/>
</dbReference>
<dbReference type="SFLD" id="SFLDG01133">
    <property type="entry name" value="C1.5.4:_Enolase-phosphatase_Li"/>
    <property type="match status" value="1"/>
</dbReference>
<dbReference type="SFLD" id="SFLDF00044">
    <property type="entry name" value="enolase-phosphatase"/>
    <property type="match status" value="1"/>
</dbReference>
<dbReference type="SUPFAM" id="SSF56784">
    <property type="entry name" value="HAD-like"/>
    <property type="match status" value="1"/>
</dbReference>
<keyword id="KW-0028">Amino-acid biosynthesis</keyword>
<keyword id="KW-0378">Hydrolase</keyword>
<keyword id="KW-0460">Magnesium</keyword>
<keyword id="KW-0479">Metal-binding</keyword>
<keyword id="KW-0486">Methionine biosynthesis</keyword>
<sequence length="232" mass="26013">MTRPQAILTDIEGTTSSISFVKDVLFPYARRAMPAYVREHGGHPQVRHWLNQVADEIGEDVPDEVLITTLQTWIDEDRKHTALKALQGMIWEDGYRTADFSAHIYTDAAIQLQAWHAEGIPLYVYSSGSVPAQKLFFAHSDAGDLSGLVSDWFDTEVGPKRESSSYRRIAERIGVPAPEILFLSDVIEELDAAKRAGMRTALLDRLEDYPTPRSADDVGSHQRVESFTQLVL</sequence>
<evidence type="ECO:0000255" key="1">
    <source>
        <dbReference type="HAMAP-Rule" id="MF_01681"/>
    </source>
</evidence>
<feature type="chain" id="PRO_0000357429" description="Enolase-phosphatase E1">
    <location>
        <begin position="1"/>
        <end position="232"/>
    </location>
</feature>
<reference key="1">
    <citation type="journal article" date="2005" name="Genome Res.">
        <title>Comparative and functional genomic analyses of the pathogenicity of phytopathogen Xanthomonas campestris pv. campestris.</title>
        <authorList>
            <person name="Qian W."/>
            <person name="Jia Y."/>
            <person name="Ren S.-X."/>
            <person name="He Y.-Q."/>
            <person name="Feng J.-X."/>
            <person name="Lu L.-F."/>
            <person name="Sun Q."/>
            <person name="Ying G."/>
            <person name="Tang D.-J."/>
            <person name="Tang H."/>
            <person name="Wu W."/>
            <person name="Hao P."/>
            <person name="Wang L."/>
            <person name="Jiang B.-L."/>
            <person name="Zeng S."/>
            <person name="Gu W.-Y."/>
            <person name="Lu G."/>
            <person name="Rong L."/>
            <person name="Tian Y."/>
            <person name="Yao Z."/>
            <person name="Fu G."/>
            <person name="Chen B."/>
            <person name="Fang R."/>
            <person name="Qiang B."/>
            <person name="Chen Z."/>
            <person name="Zhao G.-P."/>
            <person name="Tang J.-L."/>
            <person name="He C."/>
        </authorList>
    </citation>
    <scope>NUCLEOTIDE SEQUENCE [LARGE SCALE GENOMIC DNA]</scope>
    <source>
        <strain>8004</strain>
    </source>
</reference>
<protein>
    <recommendedName>
        <fullName evidence="1">Enolase-phosphatase E1</fullName>
        <ecNumber evidence="1">3.1.3.77</ecNumber>
    </recommendedName>
    <alternativeName>
        <fullName evidence="1">2,3-diketo-5-methylthio-1-phosphopentane phosphatase</fullName>
    </alternativeName>
</protein>
<accession>Q4UU49</accession>